<gene>
    <name type="ordered locus">Os07g0662500</name>
    <name type="ordered locus">LOC_Os07g46750</name>
    <name type="ORF">P0453E03.116</name>
</gene>
<name>EF1B_ORYSJ</name>
<protein>
    <recommendedName>
        <fullName>Elongation factor 1-beta</fullName>
        <shortName>EF-1-beta</shortName>
    </recommendedName>
    <alternativeName>
        <fullName>Elongation factor 1-beta'</fullName>
        <shortName>EF-1-beta'</shortName>
    </alternativeName>
    <alternativeName>
        <fullName>Elongation factor 1B-alpha 2</fullName>
    </alternativeName>
    <alternativeName>
        <fullName>eEF-1B alpha 2</fullName>
    </alternativeName>
</protein>
<sequence>MAVTFTDLHTADGLKALEQHLSGKTYVSGNAISKDDIKVFAAVPSKPGAEFPNAARWYDTVAAALASRFPGKAVGVNLPGGGAASSAAAAAPAAKDADEDDDDLDLFGDETEEDKKAADERAASKASSKKKESGKSSVLLDVKPWDDETDMKKLEEAVRSVQMEGLTWGASKLVPVGYGIKKLQIMLTIVDDLVSVDSLIEEHLTEEPINEFVQSCDIVAFNKI</sequence>
<reference key="1">
    <citation type="journal article" date="1992" name="FEBS Lett.">
        <title>Cloning and sequencing of the cDNA encoding rice elongation factor 1 beta'.</title>
        <authorList>
            <person name="Matsumoto S."/>
            <person name="Oizumi N."/>
            <person name="Taira H."/>
            <person name="Ejiri S."/>
        </authorList>
    </citation>
    <scope>NUCLEOTIDE SEQUENCE [MRNA]</scope>
    <source>
        <strain>cv. Hayayuki</strain>
        <tissue>Flower</tissue>
    </source>
</reference>
<reference key="2">
    <citation type="journal article" date="2005" name="Nature">
        <title>The map-based sequence of the rice genome.</title>
        <authorList>
            <consortium name="International rice genome sequencing project (IRGSP)"/>
        </authorList>
    </citation>
    <scope>NUCLEOTIDE SEQUENCE [LARGE SCALE GENOMIC DNA]</scope>
    <source>
        <strain>cv. Nipponbare</strain>
    </source>
</reference>
<reference key="3">
    <citation type="journal article" date="2008" name="Nucleic Acids Res.">
        <title>The rice annotation project database (RAP-DB): 2008 update.</title>
        <authorList>
            <consortium name="The rice annotation project (RAP)"/>
        </authorList>
    </citation>
    <scope>GENOME REANNOTATION</scope>
    <source>
        <strain>cv. Nipponbare</strain>
    </source>
</reference>
<reference key="4">
    <citation type="journal article" date="2013" name="Rice">
        <title>Improvement of the Oryza sativa Nipponbare reference genome using next generation sequence and optical map data.</title>
        <authorList>
            <person name="Kawahara Y."/>
            <person name="de la Bastide M."/>
            <person name="Hamilton J.P."/>
            <person name="Kanamori H."/>
            <person name="McCombie W.R."/>
            <person name="Ouyang S."/>
            <person name="Schwartz D.C."/>
            <person name="Tanaka T."/>
            <person name="Wu J."/>
            <person name="Zhou S."/>
            <person name="Childs K.L."/>
            <person name="Davidson R.M."/>
            <person name="Lin H."/>
            <person name="Quesada-Ocampo L."/>
            <person name="Vaillancourt B."/>
            <person name="Sakai H."/>
            <person name="Lee S.S."/>
            <person name="Kim J."/>
            <person name="Numa H."/>
            <person name="Itoh T."/>
            <person name="Buell C.R."/>
            <person name="Matsumoto T."/>
        </authorList>
    </citation>
    <scope>GENOME REANNOTATION</scope>
    <source>
        <strain>cv. Nipponbare</strain>
    </source>
</reference>
<reference key="5">
    <citation type="journal article" date="2003" name="Science">
        <title>Collection, mapping, and annotation of over 28,000 cDNA clones from japonica rice.</title>
        <authorList>
            <consortium name="The rice full-length cDNA consortium"/>
        </authorList>
    </citation>
    <scope>NUCLEOTIDE SEQUENCE [LARGE SCALE MRNA]</scope>
    <source>
        <strain>cv. Nipponbare</strain>
    </source>
</reference>
<reference key="6">
    <citation type="journal article" date="2004" name="Nucleic Acids Res.">
        <title>Rice proteome database based on two-dimensional polyacrylamide gel electrophoresis: its status in 2003.</title>
        <authorList>
            <person name="Komatsu S."/>
            <person name="Kojima K."/>
            <person name="Suzuki K."/>
            <person name="Ozaki K."/>
            <person name="Higo K."/>
        </authorList>
    </citation>
    <scope>PROTEIN SEQUENCE OF 2-8 AND 2-11</scope>
    <source>
        <strain>cv. Nipponbare</strain>
        <tissue>Callus</tissue>
        <tissue>Stem</tissue>
    </source>
</reference>
<keyword id="KW-0903">Direct protein sequencing</keyword>
<keyword id="KW-0251">Elongation factor</keyword>
<keyword id="KW-0648">Protein biosynthesis</keyword>
<keyword id="KW-1185">Reference proteome</keyword>
<dbReference type="EMBL" id="D12821">
    <property type="protein sequence ID" value="BAA02253.1"/>
    <property type="status" value="ALT_FRAME"/>
    <property type="molecule type" value="mRNA"/>
</dbReference>
<dbReference type="EMBL" id="AP005452">
    <property type="protein sequence ID" value="BAC22427.2"/>
    <property type="molecule type" value="Genomic_DNA"/>
</dbReference>
<dbReference type="EMBL" id="AP008213">
    <property type="protein sequence ID" value="BAF22457.1"/>
    <property type="molecule type" value="Genomic_DNA"/>
</dbReference>
<dbReference type="EMBL" id="AP014963">
    <property type="protein sequence ID" value="BAT03068.1"/>
    <property type="molecule type" value="Genomic_DNA"/>
</dbReference>
<dbReference type="EMBL" id="AK061761">
    <property type="protein sequence ID" value="BAG88096.1"/>
    <property type="molecule type" value="mRNA"/>
</dbReference>
<dbReference type="EMBL" id="AK098892">
    <property type="protein sequence ID" value="BAG93798.1"/>
    <property type="molecule type" value="mRNA"/>
</dbReference>
<dbReference type="EMBL" id="AK121942">
    <property type="protein sequence ID" value="BAH00728.1"/>
    <property type="molecule type" value="mRNA"/>
</dbReference>
<dbReference type="PIR" id="S29224">
    <property type="entry name" value="S29224"/>
</dbReference>
<dbReference type="RefSeq" id="XP_015646711.1">
    <property type="nucleotide sequence ID" value="XM_015791225.1"/>
</dbReference>
<dbReference type="SMR" id="P29545"/>
<dbReference type="FunCoup" id="P29545">
    <property type="interactions" value="2533"/>
</dbReference>
<dbReference type="STRING" id="39947.P29545"/>
<dbReference type="PaxDb" id="39947-P29545"/>
<dbReference type="EnsemblPlants" id="Os07t0662500-01">
    <property type="protein sequence ID" value="Os07t0662500-01"/>
    <property type="gene ID" value="Os07g0662500"/>
</dbReference>
<dbReference type="Gramene" id="Os07t0662500-01">
    <property type="protein sequence ID" value="Os07t0662500-01"/>
    <property type="gene ID" value="Os07g0662500"/>
</dbReference>
<dbReference type="KEGG" id="dosa:Os07g0662500"/>
<dbReference type="eggNOG" id="KOG1668">
    <property type="taxonomic scope" value="Eukaryota"/>
</dbReference>
<dbReference type="HOGENOM" id="CLU_050172_3_0_1"/>
<dbReference type="InParanoid" id="P29545"/>
<dbReference type="OMA" id="YRWYKHI"/>
<dbReference type="OrthoDB" id="331763at2759"/>
<dbReference type="Proteomes" id="UP000000763">
    <property type="component" value="Chromosome 7"/>
</dbReference>
<dbReference type="Proteomes" id="UP000059680">
    <property type="component" value="Chromosome 7"/>
</dbReference>
<dbReference type="GO" id="GO:0005829">
    <property type="term" value="C:cytosol"/>
    <property type="evidence" value="ECO:0000318"/>
    <property type="project" value="GO_Central"/>
</dbReference>
<dbReference type="GO" id="GO:0005853">
    <property type="term" value="C:eukaryotic translation elongation factor 1 complex"/>
    <property type="evidence" value="ECO:0007669"/>
    <property type="project" value="InterPro"/>
</dbReference>
<dbReference type="GO" id="GO:0005085">
    <property type="term" value="F:guanyl-nucleotide exchange factor activity"/>
    <property type="evidence" value="ECO:0000318"/>
    <property type="project" value="GO_Central"/>
</dbReference>
<dbReference type="GO" id="GO:0003746">
    <property type="term" value="F:translation elongation factor activity"/>
    <property type="evidence" value="ECO:0007669"/>
    <property type="project" value="UniProtKB-KW"/>
</dbReference>
<dbReference type="GO" id="GO:0006414">
    <property type="term" value="P:translational elongation"/>
    <property type="evidence" value="ECO:0000318"/>
    <property type="project" value="GO_Central"/>
</dbReference>
<dbReference type="CDD" id="cd00292">
    <property type="entry name" value="EF1B"/>
    <property type="match status" value="1"/>
</dbReference>
<dbReference type="FunFam" id="3.30.70.60:FF:000001">
    <property type="entry name" value="Elongation factor 1-beta 1 like"/>
    <property type="match status" value="1"/>
</dbReference>
<dbReference type="Gene3D" id="1.20.1050.130">
    <property type="match status" value="1"/>
</dbReference>
<dbReference type="Gene3D" id="3.30.70.60">
    <property type="match status" value="1"/>
</dbReference>
<dbReference type="InterPro" id="IPR036219">
    <property type="entry name" value="eEF-1beta-like_sf"/>
</dbReference>
<dbReference type="InterPro" id="IPR049720">
    <property type="entry name" value="EF1B_bsu/dsu"/>
</dbReference>
<dbReference type="InterPro" id="IPR014038">
    <property type="entry name" value="EF1B_bsu/dsu_GNE"/>
</dbReference>
<dbReference type="InterPro" id="IPR036282">
    <property type="entry name" value="Glutathione-S-Trfase_C_sf"/>
</dbReference>
<dbReference type="InterPro" id="IPR014717">
    <property type="entry name" value="Transl_elong_EF1B/ribsomal_bS6"/>
</dbReference>
<dbReference type="InterPro" id="IPR001326">
    <property type="entry name" value="Transl_elong_EF1B_B/D_CS"/>
</dbReference>
<dbReference type="PANTHER" id="PTHR11595">
    <property type="entry name" value="EF-HAND AND COILED-COIL DOMAIN-CONTAINING FAMILY MEMBER"/>
    <property type="match status" value="1"/>
</dbReference>
<dbReference type="PANTHER" id="PTHR11595:SF84">
    <property type="entry name" value="ELONGATION FACTOR 1-BETA 1"/>
    <property type="match status" value="1"/>
</dbReference>
<dbReference type="Pfam" id="PF00736">
    <property type="entry name" value="EF1_GNE"/>
    <property type="match status" value="1"/>
</dbReference>
<dbReference type="SMART" id="SM00888">
    <property type="entry name" value="EF1_GNE"/>
    <property type="match status" value="1"/>
</dbReference>
<dbReference type="SUPFAM" id="SSF54984">
    <property type="entry name" value="eEF-1beta-like"/>
    <property type="match status" value="1"/>
</dbReference>
<dbReference type="SUPFAM" id="SSF47616">
    <property type="entry name" value="GST C-terminal domain-like"/>
    <property type="match status" value="1"/>
</dbReference>
<dbReference type="PROSITE" id="PS00824">
    <property type="entry name" value="EF1BD_1"/>
    <property type="match status" value="1"/>
</dbReference>
<dbReference type="PROSITE" id="PS00825">
    <property type="entry name" value="EF1BD_2"/>
    <property type="match status" value="1"/>
</dbReference>
<accession>P29545</accession>
<accession>Q0D3W6</accession>
<accession>Q8H2U3</accession>
<evidence type="ECO:0000250" key="1"/>
<evidence type="ECO:0000269" key="2">
    <source>
    </source>
</evidence>
<evidence type="ECO:0000305" key="3"/>
<comment type="function">
    <text>EF-1-beta and EF-1-beta' stimulate the exchange of GDP bound to EF-1-alpha to GTP.</text>
</comment>
<comment type="subunit">
    <text evidence="1">EF-1 is composed of 4 subunits: alpha, beta (1B-alpha=beta'), delta (1B-beta), and gamma (1B-gamma).</text>
</comment>
<comment type="similarity">
    <text evidence="3">Belongs to the EF-1-beta/EF-1-delta family.</text>
</comment>
<comment type="sequence caution" evidence="3">
    <conflict type="frameshift">
        <sequence resource="EMBL-CDS" id="BAA02253"/>
    </conflict>
</comment>
<proteinExistence type="evidence at protein level"/>
<organism>
    <name type="scientific">Oryza sativa subsp. japonica</name>
    <name type="common">Rice</name>
    <dbReference type="NCBI Taxonomy" id="39947"/>
    <lineage>
        <taxon>Eukaryota</taxon>
        <taxon>Viridiplantae</taxon>
        <taxon>Streptophyta</taxon>
        <taxon>Embryophyta</taxon>
        <taxon>Tracheophyta</taxon>
        <taxon>Spermatophyta</taxon>
        <taxon>Magnoliopsida</taxon>
        <taxon>Liliopsida</taxon>
        <taxon>Poales</taxon>
        <taxon>Poaceae</taxon>
        <taxon>BOP clade</taxon>
        <taxon>Oryzoideae</taxon>
        <taxon>Oryzeae</taxon>
        <taxon>Oryzinae</taxon>
        <taxon>Oryza</taxon>
        <taxon>Oryza sativa</taxon>
    </lineage>
</organism>
<feature type="initiator methionine" description="Removed" evidence="2">
    <location>
        <position position="1"/>
    </location>
</feature>
<feature type="chain" id="PRO_0000155033" description="Elongation factor 1-beta">
    <location>
        <begin position="2"/>
        <end position="224"/>
    </location>
</feature>